<sequence length="1181" mass="129487">MRKKQKLPFDKLAIALMSTSILLNAQSDIKANTVTEDTPATEQAVETPQPTAVSEEAPSSKETKTPQTPDDAEETIADDANDLAPQAPAKTADTPATSKATIRDLNDPSQVKTLQEKAGKGAGTVVAVIDAGFDKNHEAWRLTDKTKARYQSKEDLEKAKKEHGITYGEWVNDKVAYYHDYSKDGKTAVDQEHGTHVSGILSGNAPSETKEPYRLEGAMPEAQLLLMRVEIVNGLADYARNYAQAIIDAVNLGAKVINMSFGNAALAYANLPDETKKAFDYAKSKGVSIVTSAGNDSSFGGKTRLPLADHPDYGVVGTPAAADSTLTVASYSPDKQLTETATVKTADQQDKEMPVLSTNRFEPNKAYDYAYANRGMKEDDFKDVKGKIALIERGDIDFKDKIANAKKAGAVGVLIYDNQDKGFPIELPNVDQMPAAFISRKDGLLLKENPQKTITFNATPKVLPTASGTKLSRFSSWGLTADGNIKPDIAAPGQDILSSVANNKYAKLSGTSMSAPLVAGIMGLLQKQYETQYPDMTPSERLDLAKKVLMSSATALYDEDEKAYFSPRQQGAGAVDAKKASAATMYVTDKDNTSSKVHLNNVSDKFEVTVTVHNKSDKPQELYYQATVQTDKVDGKLFALAPKALYETSWQKITIPANSSKQVTIPIDVSQFSKDLLAPMKNGYFLEGFVRFKQDPTKEELMSIPYIGFRGDFGNLSALEKPIYDSKDGSSYYHEANSDAKDQLDGDGLQFYALKNNFTALTTESNPWTIIKAVKEGVENIEDIESSEITETIFAGTFAKQDDDSHYYIHRHANGKPYAAISPNGDGNRDYVQFQGTFLRNAKNLVAEVLDKEGNVVWTSEVTEQVVKNYNNDLASTLGSTRFEKTRWDGKDKDGKVVANGTYTYRVRYTPISSGAKEQHTDFDVIVDNTTPEVATSATFSTEDRRLTLASKPKTSQPVYRERIAYTYMDEDLPTTEYISPNEDGTFTLPEEAETMEGATVPLKMSDFTYVVEDMAGNITYTPVTKLLEGHSNKPEQDGSDQAPDKKPETKPEQDGSGQAPDKKPETKPEQDGSGQTPDKKPETKPEQDGSGQTPDKKPETKPEKDSSGQTPGKTPQKGQPSRTLEKRSSKRALATKASTKDQLPTTNDKDTNRLHLLKLVMTTFFLGLVAHIFKTKRTED</sequence>
<name>C5AP_STRP1</name>
<protein>
    <recommendedName>
        <fullName>C5a peptidase</fullName>
        <ecNumber evidence="1">3.4.21.110</ecNumber>
    </recommendedName>
    <alternativeName>
        <fullName>SCP</fullName>
    </alternativeName>
</protein>
<keyword id="KW-0002">3D-structure</keyword>
<keyword id="KW-0134">Cell wall</keyword>
<keyword id="KW-0378">Hydrolase</keyword>
<keyword id="KW-0572">Peptidoglycan-anchor</keyword>
<keyword id="KW-0645">Protease</keyword>
<keyword id="KW-1185">Reference proteome</keyword>
<keyword id="KW-0677">Repeat</keyword>
<keyword id="KW-0964">Secreted</keyword>
<keyword id="KW-0720">Serine protease</keyword>
<keyword id="KW-0732">Signal</keyword>
<keyword id="KW-0843">Virulence</keyword>
<proteinExistence type="evidence at protein level"/>
<gene>
    <name type="primary">scpA</name>
    <name type="ordered locus">SPy_2010</name>
    <name type="ordered locus">M5005_Spy1715</name>
</gene>
<feature type="signal peptide" evidence="1">
    <location>
        <begin position="1"/>
        <end position="31"/>
    </location>
</feature>
<feature type="chain" id="PRO_0000027153" description="C5a peptidase">
    <location>
        <begin position="32"/>
        <end position="1147"/>
    </location>
</feature>
<feature type="propeptide" id="PRO_0000027154" description="Removed by sortase" evidence="2">
    <location>
        <begin position="1148"/>
        <end position="1181"/>
    </location>
</feature>
<feature type="domain" description="Peptidase S8" evidence="3">
    <location>
        <begin position="99"/>
        <end position="581"/>
    </location>
</feature>
<feature type="repeat" description="1">
    <location>
        <begin position="1034"/>
        <end position="1050"/>
    </location>
</feature>
<feature type="repeat" description="2">
    <location>
        <begin position="1051"/>
        <end position="1067"/>
    </location>
</feature>
<feature type="repeat" description="3">
    <location>
        <begin position="1068"/>
        <end position="1084"/>
    </location>
</feature>
<feature type="repeat" description="4">
    <location>
        <begin position="1085"/>
        <end position="1101"/>
    </location>
</feature>
<feature type="repeat" description="5">
    <location>
        <begin position="1102"/>
        <end position="1118"/>
    </location>
</feature>
<feature type="region of interest" description="Disordered" evidence="4">
    <location>
        <begin position="33"/>
        <end position="117"/>
    </location>
</feature>
<feature type="region of interest" description="Disordered" evidence="4">
    <location>
        <begin position="1029"/>
        <end position="1150"/>
    </location>
</feature>
<feature type="region of interest" description="5 X 17 AA tandem repeats">
    <location>
        <begin position="1034"/>
        <end position="1118"/>
    </location>
</feature>
<feature type="short sequence motif" description="LPXTG sorting signal" evidence="2">
    <location>
        <begin position="1144"/>
        <end position="1148"/>
    </location>
</feature>
<feature type="compositionally biased region" description="Polar residues" evidence="4">
    <location>
        <begin position="33"/>
        <end position="52"/>
    </location>
</feature>
<feature type="compositionally biased region" description="Acidic residues" evidence="4">
    <location>
        <begin position="70"/>
        <end position="81"/>
    </location>
</feature>
<feature type="compositionally biased region" description="Basic and acidic residues" evidence="4">
    <location>
        <begin position="1029"/>
        <end position="1054"/>
    </location>
</feature>
<feature type="compositionally biased region" description="Basic and acidic residues" evidence="4">
    <location>
        <begin position="1061"/>
        <end position="1071"/>
    </location>
</feature>
<feature type="compositionally biased region" description="Basic and acidic residues" evidence="4">
    <location>
        <begin position="1078"/>
        <end position="1088"/>
    </location>
</feature>
<feature type="compositionally biased region" description="Basic and acidic residues" evidence="4">
    <location>
        <begin position="1095"/>
        <end position="1107"/>
    </location>
</feature>
<feature type="compositionally biased region" description="Polar residues" evidence="4">
    <location>
        <begin position="1109"/>
        <end position="1123"/>
    </location>
</feature>
<feature type="compositionally biased region" description="Polar residues" evidence="4">
    <location>
        <begin position="1137"/>
        <end position="1147"/>
    </location>
</feature>
<feature type="active site" description="Charge relay system" evidence="3">
    <location>
        <position position="130"/>
    </location>
</feature>
<feature type="active site" description="Charge relay system" evidence="3">
    <location>
        <position position="193"/>
    </location>
</feature>
<feature type="active site" description="Charge relay system" evidence="3">
    <location>
        <position position="512"/>
    </location>
</feature>
<feature type="modified residue" description="Pentaglycyl murein peptidoglycan amidated threonine" evidence="2">
    <location>
        <position position="1147"/>
    </location>
</feature>
<feature type="sequence conflict" description="In Ref. 2." evidence="6" ref="2">
    <location>
        <begin position="1072"/>
        <end position="1088"/>
    </location>
</feature>
<feature type="helix" evidence="7">
    <location>
        <begin position="102"/>
        <end position="105"/>
    </location>
</feature>
<feature type="helix" evidence="7">
    <location>
        <begin position="111"/>
        <end position="118"/>
    </location>
</feature>
<feature type="strand" evidence="7">
    <location>
        <begin position="125"/>
        <end position="131"/>
    </location>
</feature>
<feature type="helix" evidence="7">
    <location>
        <begin position="145"/>
        <end position="147"/>
    </location>
</feature>
<feature type="helix" evidence="7">
    <location>
        <begin position="153"/>
        <end position="162"/>
    </location>
</feature>
<feature type="strand" evidence="7">
    <location>
        <begin position="172"/>
        <end position="180"/>
    </location>
</feature>
<feature type="turn" evidence="7">
    <location>
        <begin position="181"/>
        <end position="184"/>
    </location>
</feature>
<feature type="helix" evidence="7">
    <location>
        <begin position="192"/>
        <end position="202"/>
    </location>
</feature>
<feature type="strand" evidence="7">
    <location>
        <begin position="210"/>
        <end position="214"/>
    </location>
</feature>
<feature type="strand" evidence="7">
    <location>
        <begin position="222"/>
        <end position="228"/>
    </location>
</feature>
<feature type="helix" evidence="7">
    <location>
        <begin position="235"/>
        <end position="251"/>
    </location>
</feature>
<feature type="strand" evidence="7">
    <location>
        <begin position="254"/>
        <end position="259"/>
    </location>
</feature>
<feature type="helix" evidence="7">
    <location>
        <begin position="268"/>
        <end position="270"/>
    </location>
</feature>
<feature type="helix" evidence="7">
    <location>
        <begin position="273"/>
        <end position="284"/>
    </location>
</feature>
<feature type="strand" evidence="7">
    <location>
        <begin position="288"/>
        <end position="292"/>
    </location>
</feature>
<feature type="turn" evidence="7">
    <location>
        <begin position="319"/>
        <end position="321"/>
    </location>
</feature>
<feature type="strand" evidence="7">
    <location>
        <begin position="325"/>
        <end position="332"/>
    </location>
</feature>
<feature type="strand" evidence="7">
    <location>
        <begin position="334"/>
        <end position="344"/>
    </location>
</feature>
<feature type="strand" evidence="7">
    <location>
        <begin position="350"/>
        <end position="359"/>
    </location>
</feature>
<feature type="strand" evidence="7">
    <location>
        <begin position="366"/>
        <end position="371"/>
    </location>
</feature>
<feature type="helix" evidence="7">
    <location>
        <begin position="378"/>
        <end position="381"/>
    </location>
</feature>
<feature type="strand" evidence="7">
    <location>
        <begin position="387"/>
        <end position="392"/>
    </location>
</feature>
<feature type="helix" evidence="7">
    <location>
        <begin position="398"/>
        <end position="408"/>
    </location>
</feature>
<feature type="strand" evidence="7">
    <location>
        <begin position="411"/>
        <end position="416"/>
    </location>
</feature>
<feature type="strand" evidence="7">
    <location>
        <begin position="435"/>
        <end position="438"/>
    </location>
</feature>
<feature type="helix" evidence="7">
    <location>
        <begin position="440"/>
        <end position="447"/>
    </location>
</feature>
<feature type="strand" evidence="7">
    <location>
        <begin position="453"/>
        <end position="456"/>
    </location>
</feature>
<feature type="strand" evidence="7">
    <location>
        <begin position="461"/>
        <end position="464"/>
    </location>
</feature>
<feature type="strand" evidence="7">
    <location>
        <begin position="469"/>
        <end position="471"/>
    </location>
</feature>
<feature type="strand" evidence="7">
    <location>
        <begin position="489"/>
        <end position="492"/>
    </location>
</feature>
<feature type="strand" evidence="7">
    <location>
        <begin position="494"/>
        <end position="500"/>
    </location>
</feature>
<feature type="turn" evidence="7">
    <location>
        <begin position="501"/>
        <end position="503"/>
    </location>
</feature>
<feature type="strand" evidence="7">
    <location>
        <begin position="504"/>
        <end position="508"/>
    </location>
</feature>
<feature type="helix" evidence="7">
    <location>
        <begin position="511"/>
        <end position="532"/>
    </location>
</feature>
<feature type="helix" evidence="7">
    <location>
        <begin position="538"/>
        <end position="552"/>
    </location>
</feature>
<feature type="turn" evidence="7">
    <location>
        <begin position="559"/>
        <end position="562"/>
    </location>
</feature>
<feature type="helix" evidence="7">
    <location>
        <begin position="567"/>
        <end position="570"/>
    </location>
</feature>
<feature type="helix" evidence="7">
    <location>
        <begin position="577"/>
        <end position="582"/>
    </location>
</feature>
<feature type="strand" evidence="7">
    <location>
        <begin position="585"/>
        <end position="588"/>
    </location>
</feature>
<feature type="strand" evidence="7">
    <location>
        <begin position="595"/>
        <end position="602"/>
    </location>
</feature>
<feature type="strand" evidence="7">
    <location>
        <begin position="604"/>
        <end position="614"/>
    </location>
</feature>
<feature type="strand" evidence="7">
    <location>
        <begin position="616"/>
        <end position="618"/>
    </location>
</feature>
<feature type="strand" evidence="7">
    <location>
        <begin position="620"/>
        <end position="634"/>
    </location>
</feature>
<feature type="strand" evidence="7">
    <location>
        <begin position="637"/>
        <end position="647"/>
    </location>
</feature>
<feature type="strand" evidence="7">
    <location>
        <begin position="651"/>
        <end position="655"/>
    </location>
</feature>
<feature type="strand" evidence="7">
    <location>
        <begin position="659"/>
        <end position="668"/>
    </location>
</feature>
<feature type="helix" evidence="7">
    <location>
        <begin position="670"/>
        <end position="672"/>
    </location>
</feature>
<feature type="helix" evidence="7">
    <location>
        <begin position="673"/>
        <end position="679"/>
    </location>
</feature>
<feature type="strand" evidence="7">
    <location>
        <begin position="684"/>
        <end position="695"/>
    </location>
</feature>
<feature type="strand" evidence="7">
    <location>
        <begin position="700"/>
        <end position="711"/>
    </location>
</feature>
<feature type="helix" evidence="7">
    <location>
        <begin position="713"/>
        <end position="715"/>
    </location>
</feature>
<feature type="helix" evidence="7">
    <location>
        <begin position="723"/>
        <end position="725"/>
    </location>
</feature>
<feature type="strand" evidence="7">
    <location>
        <begin position="727"/>
        <end position="729"/>
    </location>
</feature>
<feature type="strand" evidence="7">
    <location>
        <begin position="758"/>
        <end position="765"/>
    </location>
</feature>
<feature type="helix" evidence="7">
    <location>
        <begin position="768"/>
        <end position="776"/>
    </location>
</feature>
<feature type="turn" evidence="7">
    <location>
        <begin position="783"/>
        <end position="785"/>
    </location>
</feature>
<feature type="strand" evidence="7">
    <location>
        <begin position="791"/>
        <end position="794"/>
    </location>
</feature>
<feature type="strand" evidence="7">
    <location>
        <begin position="797"/>
        <end position="799"/>
    </location>
</feature>
<feature type="turn" evidence="7">
    <location>
        <begin position="801"/>
        <end position="803"/>
    </location>
</feature>
<feature type="strand" evidence="7">
    <location>
        <begin position="807"/>
        <end position="809"/>
    </location>
</feature>
<feature type="strand" evidence="7">
    <location>
        <begin position="813"/>
        <end position="815"/>
    </location>
</feature>
<feature type="strand" evidence="7">
    <location>
        <begin position="819"/>
        <end position="821"/>
    </location>
</feature>
<feature type="strand" evidence="7">
    <location>
        <begin position="824"/>
        <end position="829"/>
    </location>
</feature>
<feature type="strand" evidence="7">
    <location>
        <begin position="832"/>
        <end position="836"/>
    </location>
</feature>
<feature type="strand" evidence="7">
    <location>
        <begin position="838"/>
        <end position="840"/>
    </location>
</feature>
<feature type="strand" evidence="7">
    <location>
        <begin position="842"/>
        <end position="850"/>
    </location>
</feature>
<feature type="strand" evidence="7">
    <location>
        <begin position="852"/>
        <end position="854"/>
    </location>
</feature>
<feature type="strand" evidence="7">
    <location>
        <begin position="856"/>
        <end position="859"/>
    </location>
</feature>
<feature type="strand" evidence="7">
    <location>
        <begin position="863"/>
        <end position="866"/>
    </location>
</feature>
<feature type="helix" evidence="7">
    <location>
        <begin position="884"/>
        <end position="886"/>
    </location>
</feature>
<feature type="strand" evidence="7">
    <location>
        <begin position="900"/>
        <end position="913"/>
    </location>
</feature>
<feature type="strand" evidence="7">
    <location>
        <begin position="919"/>
        <end position="927"/>
    </location>
</feature>
<feature type="strand" evidence="7">
    <location>
        <begin position="938"/>
        <end position="941"/>
    </location>
</feature>
<feature type="turn" evidence="7">
    <location>
        <begin position="942"/>
        <end position="945"/>
    </location>
</feature>
<feature type="strand" evidence="7">
    <location>
        <begin position="946"/>
        <end position="951"/>
    </location>
</feature>
<feature type="strand" evidence="7">
    <location>
        <begin position="959"/>
        <end position="979"/>
    </location>
</feature>
<feature type="strand" evidence="7">
    <location>
        <begin position="991"/>
        <end position="994"/>
    </location>
</feature>
<feature type="strand" evidence="7">
    <location>
        <begin position="1000"/>
        <end position="1002"/>
    </location>
</feature>
<feature type="helix" evidence="7">
    <location>
        <begin position="1005"/>
        <end position="1007"/>
    </location>
</feature>
<feature type="strand" evidence="7">
    <location>
        <begin position="1008"/>
        <end position="1014"/>
    </location>
</feature>
<feature type="strand" evidence="7">
    <location>
        <begin position="1019"/>
        <end position="1023"/>
    </location>
</feature>
<feature type="helix" evidence="7">
    <location>
        <begin position="1024"/>
        <end position="1028"/>
    </location>
</feature>
<reference key="1">
    <citation type="journal article" date="2001" name="Proc. Natl. Acad. Sci. U.S.A.">
        <title>Complete genome sequence of an M1 strain of Streptococcus pyogenes.</title>
        <authorList>
            <person name="Ferretti J.J."/>
            <person name="McShan W.M."/>
            <person name="Ajdic D.J."/>
            <person name="Savic D.J."/>
            <person name="Savic G."/>
            <person name="Lyon K."/>
            <person name="Primeaux C."/>
            <person name="Sezate S."/>
            <person name="Suvorov A.N."/>
            <person name="Kenton S."/>
            <person name="Lai H.S."/>
            <person name="Lin S.P."/>
            <person name="Qian Y."/>
            <person name="Jia H.G."/>
            <person name="Najar F.Z."/>
            <person name="Ren Q."/>
            <person name="Zhu H."/>
            <person name="Song L."/>
            <person name="White J."/>
            <person name="Yuan X."/>
            <person name="Clifton S.W."/>
            <person name="Roe B.A."/>
            <person name="McLaughlin R.E."/>
        </authorList>
    </citation>
    <scope>NUCLEOTIDE SEQUENCE [LARGE SCALE GENOMIC DNA]</scope>
    <source>
        <strain>ATCC 700294 / SF370 / Serotype M1</strain>
    </source>
</reference>
<reference key="2">
    <citation type="journal article" date="2005" name="J. Infect. Dis.">
        <title>Evolutionary origin and emergence of a highly successful clone of serotype M1 group A Streptococcus involved multiple horizontal gene transfer events.</title>
        <authorList>
            <person name="Sumby P."/>
            <person name="Porcella S.F."/>
            <person name="Madrigal A.G."/>
            <person name="Barbian K.D."/>
            <person name="Virtaneva K."/>
            <person name="Ricklefs S.M."/>
            <person name="Sturdevant D.E."/>
            <person name="Graham M.R."/>
            <person name="Vuopio-Varkila J."/>
            <person name="Hoe N.P."/>
            <person name="Musser J.M."/>
        </authorList>
    </citation>
    <scope>NUCLEOTIDE SEQUENCE [LARGE SCALE GENOMIC DNA]</scope>
    <source>
        <strain>ATCC BAA-947 / MGAS5005 / Serotype M1</strain>
    </source>
</reference>
<reference key="3">
    <citation type="journal article" date="1995" name="J. Biol. Chem.">
        <title>Streptococcal cysteine proteinase releases biologically active fragments of streptococcal surface proteins.</title>
        <authorList>
            <person name="Berge A."/>
            <person name="Bjoerck L."/>
        </authorList>
    </citation>
    <scope>PROTEOLYTIC CLEAVAGE</scope>
</reference>
<comment type="function">
    <text evidence="1">This virulence factor of S.pyogenes specifically cleaves the human serum chemotaxin C5a at '68-Lys-|-Asp-69' bond near its C-terminus, destroying its ability to serve as a chemoattractant.</text>
</comment>
<comment type="catalytic activity">
    <reaction evidence="1">
        <text>The primary cleavage site is at 67-His-|-Lys-68 in human C5a with a minor secondary cleavage site at 58-Ala-|-Ser-59.</text>
        <dbReference type="EC" id="3.4.21.110"/>
    </reaction>
</comment>
<comment type="subcellular location">
    <subcellularLocation>
        <location evidence="6">Secreted</location>
        <location evidence="6">Cell wall</location>
        <topology evidence="6">Peptidoglycan-anchor</topology>
    </subcellularLocation>
</comment>
<comment type="PTM">
    <text evidence="5 6">Cleaved by SpeB protease; leading to its degradation (PubMed:7730368). Degradation by SpeB is probably strictly regulated to preserve integrity of C5a peptidase (Probable).</text>
</comment>
<comment type="similarity">
    <text evidence="6">Belongs to the peptidase S8 family.</text>
</comment>
<organism>
    <name type="scientific">Streptococcus pyogenes serotype M1</name>
    <dbReference type="NCBI Taxonomy" id="301447"/>
    <lineage>
        <taxon>Bacteria</taxon>
        <taxon>Bacillati</taxon>
        <taxon>Bacillota</taxon>
        <taxon>Bacilli</taxon>
        <taxon>Lactobacillales</taxon>
        <taxon>Streptococcaceae</taxon>
        <taxon>Streptococcus</taxon>
    </lineage>
</organism>
<dbReference type="EC" id="3.4.21.110" evidence="1"/>
<dbReference type="EMBL" id="AE004092">
    <property type="protein sequence ID" value="AAK34691.1"/>
    <property type="molecule type" value="Genomic_DNA"/>
</dbReference>
<dbReference type="EMBL" id="CP000017">
    <property type="protein sequence ID" value="AAZ52333.1"/>
    <property type="molecule type" value="Genomic_DNA"/>
</dbReference>
<dbReference type="RefSeq" id="NP_269970.1">
    <property type="nucleotide sequence ID" value="NC_002737.2"/>
</dbReference>
<dbReference type="PDB" id="7BJ3">
    <property type="method" value="X-ray"/>
    <property type="resolution" value="2.60 A"/>
    <property type="chains" value="A=32-1032"/>
</dbReference>
<dbReference type="PDBsum" id="7BJ3"/>
<dbReference type="SMR" id="P58099"/>
<dbReference type="MEROPS" id="S08.020"/>
<dbReference type="PaxDb" id="1314-HKU360_01830"/>
<dbReference type="KEGG" id="spy:SPy_2010"/>
<dbReference type="KEGG" id="spz:M5005_Spy1715"/>
<dbReference type="PATRIC" id="fig|160490.10.peg.1748"/>
<dbReference type="HOGENOM" id="CLU_001768_3_0_9"/>
<dbReference type="OMA" id="MHGMHVA"/>
<dbReference type="BRENDA" id="3.4.21.110">
    <property type="organism ID" value="11745"/>
</dbReference>
<dbReference type="Proteomes" id="UP000000750">
    <property type="component" value="Chromosome"/>
</dbReference>
<dbReference type="GO" id="GO:0005576">
    <property type="term" value="C:extracellular region"/>
    <property type="evidence" value="ECO:0007669"/>
    <property type="project" value="UniProtKB-KW"/>
</dbReference>
<dbReference type="GO" id="GO:0016020">
    <property type="term" value="C:membrane"/>
    <property type="evidence" value="ECO:0007669"/>
    <property type="project" value="InterPro"/>
</dbReference>
<dbReference type="GO" id="GO:0004252">
    <property type="term" value="F:serine-type endopeptidase activity"/>
    <property type="evidence" value="ECO:0007669"/>
    <property type="project" value="InterPro"/>
</dbReference>
<dbReference type="GO" id="GO:0006508">
    <property type="term" value="P:proteolysis"/>
    <property type="evidence" value="ECO:0007669"/>
    <property type="project" value="UniProtKB-KW"/>
</dbReference>
<dbReference type="CDD" id="cd02133">
    <property type="entry name" value="PA_C5a_like"/>
    <property type="match status" value="1"/>
</dbReference>
<dbReference type="CDD" id="cd07475">
    <property type="entry name" value="Peptidases_S8_C5a_Peptidase"/>
    <property type="match status" value="1"/>
</dbReference>
<dbReference type="Gene3D" id="2.60.40.4070">
    <property type="match status" value="1"/>
</dbReference>
<dbReference type="Gene3D" id="3.50.30.30">
    <property type="match status" value="1"/>
</dbReference>
<dbReference type="Gene3D" id="2.60.40.10">
    <property type="entry name" value="Immunoglobulins"/>
    <property type="match status" value="1"/>
</dbReference>
<dbReference type="Gene3D" id="3.40.50.200">
    <property type="entry name" value="Peptidase S8/S53 domain"/>
    <property type="match status" value="1"/>
</dbReference>
<dbReference type="Gene3D" id="2.60.40.1710">
    <property type="entry name" value="Subtilisin-like superfamily"/>
    <property type="match status" value="1"/>
</dbReference>
<dbReference type="InterPro" id="IPR010435">
    <property type="entry name" value="C5a/SBT2-like_Fn3"/>
</dbReference>
<dbReference type="InterPro" id="IPR034216">
    <property type="entry name" value="C5a_Peptidase"/>
</dbReference>
<dbReference type="InterPro" id="IPR013783">
    <property type="entry name" value="Ig-like_fold"/>
</dbReference>
<dbReference type="InterPro" id="IPR019931">
    <property type="entry name" value="LPXTG_anchor"/>
</dbReference>
<dbReference type="InterPro" id="IPR046450">
    <property type="entry name" value="PA_dom_sf"/>
</dbReference>
<dbReference type="InterPro" id="IPR003137">
    <property type="entry name" value="PA_domain"/>
</dbReference>
<dbReference type="InterPro" id="IPR000209">
    <property type="entry name" value="Peptidase_S8/S53_dom"/>
</dbReference>
<dbReference type="InterPro" id="IPR036852">
    <property type="entry name" value="Peptidase_S8/S53_dom_sf"/>
</dbReference>
<dbReference type="InterPro" id="IPR023827">
    <property type="entry name" value="Peptidase_S8_Asp-AS"/>
</dbReference>
<dbReference type="InterPro" id="IPR022398">
    <property type="entry name" value="Peptidase_S8_His-AS"/>
</dbReference>
<dbReference type="InterPro" id="IPR023828">
    <property type="entry name" value="Peptidase_S8_Ser-AS"/>
</dbReference>
<dbReference type="InterPro" id="IPR050131">
    <property type="entry name" value="Peptidase_S8_subtilisin-like"/>
</dbReference>
<dbReference type="InterPro" id="IPR015500">
    <property type="entry name" value="Peptidase_S8_subtilisin-rel"/>
</dbReference>
<dbReference type="InterPro" id="IPR053869">
    <property type="entry name" value="ScpA_Fn3_3rd"/>
</dbReference>
<dbReference type="PANTHER" id="PTHR43806:SF11">
    <property type="entry name" value="CEREVISIN-RELATED"/>
    <property type="match status" value="1"/>
</dbReference>
<dbReference type="PANTHER" id="PTHR43806">
    <property type="entry name" value="PEPTIDASE S8"/>
    <property type="match status" value="1"/>
</dbReference>
<dbReference type="Pfam" id="PF13585">
    <property type="entry name" value="CHU_C"/>
    <property type="match status" value="1"/>
</dbReference>
<dbReference type="Pfam" id="PF06280">
    <property type="entry name" value="fn3_5"/>
    <property type="match status" value="1"/>
</dbReference>
<dbReference type="Pfam" id="PF02225">
    <property type="entry name" value="PA"/>
    <property type="match status" value="1"/>
</dbReference>
<dbReference type="Pfam" id="PF00082">
    <property type="entry name" value="Peptidase_S8"/>
    <property type="match status" value="1"/>
</dbReference>
<dbReference type="Pfam" id="PF22143">
    <property type="entry name" value="ScpA_C"/>
    <property type="match status" value="1"/>
</dbReference>
<dbReference type="PRINTS" id="PR00723">
    <property type="entry name" value="SUBTILISIN"/>
</dbReference>
<dbReference type="SUPFAM" id="SSF52025">
    <property type="entry name" value="PA domain"/>
    <property type="match status" value="1"/>
</dbReference>
<dbReference type="SUPFAM" id="SSF52743">
    <property type="entry name" value="Subtilisin-like"/>
    <property type="match status" value="1"/>
</dbReference>
<dbReference type="PROSITE" id="PS50847">
    <property type="entry name" value="GRAM_POS_ANCHORING"/>
    <property type="match status" value="1"/>
</dbReference>
<dbReference type="PROSITE" id="PS51892">
    <property type="entry name" value="SUBTILASE"/>
    <property type="match status" value="1"/>
</dbReference>
<dbReference type="PROSITE" id="PS00136">
    <property type="entry name" value="SUBTILASE_ASP"/>
    <property type="match status" value="1"/>
</dbReference>
<dbReference type="PROSITE" id="PS00137">
    <property type="entry name" value="SUBTILASE_HIS"/>
    <property type="match status" value="1"/>
</dbReference>
<dbReference type="PROSITE" id="PS00138">
    <property type="entry name" value="SUBTILASE_SER"/>
    <property type="match status" value="1"/>
</dbReference>
<evidence type="ECO:0000250" key="1">
    <source>
        <dbReference type="UniProtKB" id="P15926"/>
    </source>
</evidence>
<evidence type="ECO:0000255" key="2">
    <source>
        <dbReference type="PROSITE-ProRule" id="PRU00477"/>
    </source>
</evidence>
<evidence type="ECO:0000255" key="3">
    <source>
        <dbReference type="PROSITE-ProRule" id="PRU01240"/>
    </source>
</evidence>
<evidence type="ECO:0000256" key="4">
    <source>
        <dbReference type="SAM" id="MobiDB-lite"/>
    </source>
</evidence>
<evidence type="ECO:0000269" key="5">
    <source>
    </source>
</evidence>
<evidence type="ECO:0000305" key="6"/>
<evidence type="ECO:0007829" key="7">
    <source>
        <dbReference type="PDB" id="7BJ3"/>
    </source>
</evidence>
<accession>P58099</accession>
<accession>Q48WE2</accession>